<reference key="1">
    <citation type="journal article" date="2000" name="J. Biol. Chem.">
        <title>Desferrioxamine-mediated iron uptake in Saccharomyces cerevisiae. Evidence for two pathways of iron uptake.</title>
        <authorList>
            <person name="Yun C.-W."/>
            <person name="Ferea T."/>
            <person name="Rashford J."/>
            <person name="Ardon O."/>
            <person name="Brown P.O."/>
            <person name="Botstein D."/>
            <person name="Kaplan J."/>
            <person name="Philpott C.C."/>
        </authorList>
    </citation>
    <scope>NUCLEOTIDE SEQUENCE [GENOMIC DNA]</scope>
</reference>
<reference key="2">
    <citation type="journal article" date="1994" name="Science">
        <title>Complete nucleotide sequence of Saccharomyces cerevisiae chromosome VIII.</title>
        <authorList>
            <person name="Johnston M."/>
            <person name="Andrews S."/>
            <person name="Brinkman R."/>
            <person name="Cooper J."/>
            <person name="Ding H."/>
            <person name="Dover J."/>
            <person name="Du Z."/>
            <person name="Favello A."/>
            <person name="Fulton L."/>
            <person name="Gattung S."/>
            <person name="Geisel C."/>
            <person name="Kirsten J."/>
            <person name="Kucaba T."/>
            <person name="Hillier L.W."/>
            <person name="Jier M."/>
            <person name="Johnston L."/>
            <person name="Langston Y."/>
            <person name="Latreille P."/>
            <person name="Louis E.J."/>
            <person name="Macri C."/>
            <person name="Mardis E."/>
            <person name="Menezes S."/>
            <person name="Mouser L."/>
            <person name="Nhan M."/>
            <person name="Rifkin L."/>
            <person name="Riles L."/>
            <person name="St Peter H."/>
            <person name="Trevaskis E."/>
            <person name="Vaughan K."/>
            <person name="Vignati D."/>
            <person name="Wilcox L."/>
            <person name="Wohldman P."/>
            <person name="Waterston R."/>
            <person name="Wilson R."/>
            <person name="Vaudin M."/>
        </authorList>
    </citation>
    <scope>NUCLEOTIDE SEQUENCE [LARGE SCALE GENOMIC DNA]</scope>
    <source>
        <strain>ATCC 204508 / S288c</strain>
    </source>
</reference>
<reference key="3">
    <citation type="journal article" date="2014" name="G3 (Bethesda)">
        <title>The reference genome sequence of Saccharomyces cerevisiae: Then and now.</title>
        <authorList>
            <person name="Engel S.R."/>
            <person name="Dietrich F.S."/>
            <person name="Fisk D.G."/>
            <person name="Binkley G."/>
            <person name="Balakrishnan R."/>
            <person name="Costanzo M.C."/>
            <person name="Dwight S.S."/>
            <person name="Hitz B.C."/>
            <person name="Karra K."/>
            <person name="Nash R.S."/>
            <person name="Weng S."/>
            <person name="Wong E.D."/>
            <person name="Lloyd P."/>
            <person name="Skrzypek M.S."/>
            <person name="Miyasato S.R."/>
            <person name="Simison M."/>
            <person name="Cherry J.M."/>
        </authorList>
    </citation>
    <scope>GENOME REANNOTATION</scope>
    <source>
        <strain>ATCC 204508 / S288c</strain>
    </source>
</reference>
<reference key="4">
    <citation type="journal article" date="2003" name="Proc. Natl. Acad. Sci. U.S.A.">
        <title>The mechanism of ferrichrome transport through Arn1p and its metabolism in Saccharomyces cerevisiae.</title>
        <authorList>
            <person name="Moore R.E."/>
            <person name="Kim Y."/>
            <person name="Philpott C.C."/>
        </authorList>
    </citation>
    <scope>FUNCTION</scope>
    <scope>SUBCELLULAR LOCATION</scope>
</reference>
<reference key="5">
    <citation type="journal article" date="2000" name="J. Biol. Chem.">
        <title>Siderophore-iron uptake in Saccharomyces cerevisiae. Identification of ferrichrome and fusarinine transporters.</title>
        <authorList>
            <person name="Yun C.-W."/>
            <person name="Tiedeman J.S."/>
            <person name="Moore R.E."/>
            <person name="Philpott C.C."/>
        </authorList>
    </citation>
    <scope>SUBCELLULAR LOCATION</scope>
</reference>
<reference key="6">
    <citation type="journal article" date="2006" name="Proc. Natl. Acad. Sci. U.S.A.">
        <title>A global topology map of the Saccharomyces cerevisiae membrane proteome.</title>
        <authorList>
            <person name="Kim H."/>
            <person name="Melen K."/>
            <person name="Oesterberg M."/>
            <person name="von Heijne G."/>
        </authorList>
    </citation>
    <scope>TOPOLOGY [LARGE SCALE ANALYSIS]</scope>
    <source>
        <strain>ATCC 208353 / W303-1A</strain>
    </source>
</reference>
<organism>
    <name type="scientific">Saccharomyces cerevisiae (strain ATCC 204508 / S288c)</name>
    <name type="common">Baker's yeast</name>
    <dbReference type="NCBI Taxonomy" id="559292"/>
    <lineage>
        <taxon>Eukaryota</taxon>
        <taxon>Fungi</taxon>
        <taxon>Dikarya</taxon>
        <taxon>Ascomycota</taxon>
        <taxon>Saccharomycotina</taxon>
        <taxon>Saccharomycetes</taxon>
        <taxon>Saccharomycetales</taxon>
        <taxon>Saccharomycetaceae</taxon>
        <taxon>Saccharomyces</taxon>
    </lineage>
</organism>
<proteinExistence type="evidence at protein level"/>
<accession>P38731</accession>
<accession>D3DKS9</accession>
<name>ARN1_YEAST</name>
<protein>
    <recommendedName>
        <fullName>Siderophore iron transporter ARN1</fullName>
    </recommendedName>
    <alternativeName>
        <fullName>Ferrichrome permease</fullName>
    </alternativeName>
</protein>
<comment type="function">
    <text evidence="3">Involved in the transport of siderophore ferrichrome and so has a role in iron homeostasis.</text>
</comment>
<comment type="subcellular location">
    <subcellularLocation>
        <location evidence="3">Cell membrane</location>
        <topology evidence="4">Multi-pass membrane protein</topology>
    </subcellularLocation>
    <subcellularLocation>
        <location evidence="2">Endosome membrane</location>
        <topology evidence="4">Multi-pass membrane protein</topology>
    </subcellularLocation>
</comment>
<comment type="similarity">
    <text evidence="5">Belongs to the major facilitator superfamily.</text>
</comment>
<dbReference type="EMBL" id="U11583">
    <property type="protein sequence ID" value="AAB65052.1"/>
    <property type="molecule type" value="Genomic_DNA"/>
</dbReference>
<dbReference type="EMBL" id="BK006934">
    <property type="protein sequence ID" value="DAA06646.1"/>
    <property type="molecule type" value="Genomic_DNA"/>
</dbReference>
<dbReference type="PIR" id="S48928">
    <property type="entry name" value="S48928"/>
</dbReference>
<dbReference type="RefSeq" id="NP_011823.1">
    <property type="nucleotide sequence ID" value="NM_001179120.1"/>
</dbReference>
<dbReference type="SMR" id="P38731"/>
<dbReference type="BioGRID" id="36383">
    <property type="interactions" value="36"/>
</dbReference>
<dbReference type="FunCoup" id="P38731">
    <property type="interactions" value="55"/>
</dbReference>
<dbReference type="STRING" id="4932.YHL040C"/>
<dbReference type="TCDB" id="2.A.1.16.4">
    <property type="family name" value="the major facilitator superfamily (mfs)"/>
</dbReference>
<dbReference type="iPTMnet" id="P38731"/>
<dbReference type="PaxDb" id="4932-YHL040C"/>
<dbReference type="PeptideAtlas" id="P38731"/>
<dbReference type="EnsemblFungi" id="YHL040C_mRNA">
    <property type="protein sequence ID" value="YHL040C"/>
    <property type="gene ID" value="YHL040C"/>
</dbReference>
<dbReference type="GeneID" id="856345"/>
<dbReference type="KEGG" id="sce:YHL040C"/>
<dbReference type="AGR" id="SGD:S000001032"/>
<dbReference type="SGD" id="S000001032">
    <property type="gene designation" value="ARN1"/>
</dbReference>
<dbReference type="VEuPathDB" id="FungiDB:YHL040C"/>
<dbReference type="eggNOG" id="KOG0254">
    <property type="taxonomic scope" value="Eukaryota"/>
</dbReference>
<dbReference type="GeneTree" id="ENSGT00940000176305"/>
<dbReference type="HOGENOM" id="CLU_012970_2_1_1"/>
<dbReference type="InParanoid" id="P38731"/>
<dbReference type="OMA" id="VPTWPFI"/>
<dbReference type="OrthoDB" id="2241241at2759"/>
<dbReference type="BioCyc" id="YEAST:G3O-31058-MONOMER"/>
<dbReference type="BioGRID-ORCS" id="856345">
    <property type="hits" value="0 hits in 10 CRISPR screens"/>
</dbReference>
<dbReference type="PRO" id="PR:P38731"/>
<dbReference type="Proteomes" id="UP000002311">
    <property type="component" value="Chromosome VIII"/>
</dbReference>
<dbReference type="RNAct" id="P38731">
    <property type="molecule type" value="protein"/>
</dbReference>
<dbReference type="GO" id="GO:0071944">
    <property type="term" value="C:cell periphery"/>
    <property type="evidence" value="ECO:0007005"/>
    <property type="project" value="SGD"/>
</dbReference>
<dbReference type="GO" id="GO:0005737">
    <property type="term" value="C:cytoplasm"/>
    <property type="evidence" value="ECO:0007005"/>
    <property type="project" value="SGD"/>
</dbReference>
<dbReference type="GO" id="GO:0031410">
    <property type="term" value="C:cytoplasmic vesicle"/>
    <property type="evidence" value="ECO:0000314"/>
    <property type="project" value="SGD"/>
</dbReference>
<dbReference type="GO" id="GO:0005768">
    <property type="term" value="C:endosome"/>
    <property type="evidence" value="ECO:0000314"/>
    <property type="project" value="SGD"/>
</dbReference>
<dbReference type="GO" id="GO:0010008">
    <property type="term" value="C:endosome membrane"/>
    <property type="evidence" value="ECO:0007669"/>
    <property type="project" value="UniProtKB-SubCell"/>
</dbReference>
<dbReference type="GO" id="GO:0000324">
    <property type="term" value="C:fungal-type vacuole"/>
    <property type="evidence" value="ECO:0007005"/>
    <property type="project" value="SGD"/>
</dbReference>
<dbReference type="GO" id="GO:0005634">
    <property type="term" value="C:nucleus"/>
    <property type="evidence" value="ECO:0007005"/>
    <property type="project" value="SGD"/>
</dbReference>
<dbReference type="GO" id="GO:0005886">
    <property type="term" value="C:plasma membrane"/>
    <property type="evidence" value="ECO:0000314"/>
    <property type="project" value="SGD"/>
</dbReference>
<dbReference type="GO" id="GO:0005774">
    <property type="term" value="C:vacuolar membrane"/>
    <property type="evidence" value="ECO:0000318"/>
    <property type="project" value="GO_Central"/>
</dbReference>
<dbReference type="GO" id="GO:0015343">
    <property type="term" value="F:siderophore-iron transmembrane transporter activity"/>
    <property type="evidence" value="ECO:0000315"/>
    <property type="project" value="SGD"/>
</dbReference>
<dbReference type="GO" id="GO:0006879">
    <property type="term" value="P:intracellular iron ion homeostasis"/>
    <property type="evidence" value="ECO:0000318"/>
    <property type="project" value="GO_Central"/>
</dbReference>
<dbReference type="GO" id="GO:0015891">
    <property type="term" value="P:siderophore transport"/>
    <property type="evidence" value="ECO:0000315"/>
    <property type="project" value="SGD"/>
</dbReference>
<dbReference type="GO" id="GO:0055085">
    <property type="term" value="P:transmembrane transport"/>
    <property type="evidence" value="ECO:0000318"/>
    <property type="project" value="GO_Central"/>
</dbReference>
<dbReference type="CDD" id="cd17322">
    <property type="entry name" value="MFS_ARN_like"/>
    <property type="match status" value="1"/>
</dbReference>
<dbReference type="FunFam" id="1.20.1250.20:FF:000197">
    <property type="entry name" value="Siderophore iron transporter 1"/>
    <property type="match status" value="1"/>
</dbReference>
<dbReference type="FunFam" id="1.20.1250.20:FF:000420">
    <property type="entry name" value="Siderophore transporter"/>
    <property type="match status" value="1"/>
</dbReference>
<dbReference type="Gene3D" id="1.20.1250.20">
    <property type="entry name" value="MFS general substrate transporter like domains"/>
    <property type="match status" value="2"/>
</dbReference>
<dbReference type="InterPro" id="IPR036259">
    <property type="entry name" value="MFS_trans_sf"/>
</dbReference>
<dbReference type="PANTHER" id="PTHR23501:SF92">
    <property type="entry name" value="GLUTATHIONE EXCHANGER 1-RELATED"/>
    <property type="match status" value="1"/>
</dbReference>
<dbReference type="PANTHER" id="PTHR23501">
    <property type="entry name" value="MAJOR FACILITATOR SUPERFAMILY"/>
    <property type="match status" value="1"/>
</dbReference>
<dbReference type="SUPFAM" id="SSF103473">
    <property type="entry name" value="MFS general substrate transporter"/>
    <property type="match status" value="1"/>
</dbReference>
<evidence type="ECO:0000255" key="1"/>
<evidence type="ECO:0000269" key="2">
    <source>
    </source>
</evidence>
<evidence type="ECO:0000269" key="3">
    <source>
    </source>
</evidence>
<evidence type="ECO:0000269" key="4">
    <source>
    </source>
</evidence>
<evidence type="ECO:0000305" key="5"/>
<feature type="chain" id="PRO_0000084862" description="Siderophore iron transporter ARN1">
    <location>
        <begin position="1"/>
        <end position="627"/>
    </location>
</feature>
<feature type="topological domain" description="Extracellular" evidence="1">
    <location>
        <begin position="1"/>
        <end position="70"/>
    </location>
</feature>
<feature type="transmembrane region" description="Helical" evidence="1">
    <location>
        <begin position="71"/>
        <end position="91"/>
    </location>
</feature>
<feature type="topological domain" description="Cytoplasmic" evidence="1">
    <location>
        <begin position="92"/>
        <end position="110"/>
    </location>
</feature>
<feature type="transmembrane region" description="Helical" evidence="1">
    <location>
        <begin position="111"/>
        <end position="131"/>
    </location>
</feature>
<feature type="topological domain" description="Extracellular" evidence="1">
    <location>
        <begin position="132"/>
        <end position="135"/>
    </location>
</feature>
<feature type="transmembrane region" description="Helical" evidence="1">
    <location>
        <begin position="136"/>
        <end position="156"/>
    </location>
</feature>
<feature type="topological domain" description="Cytoplasmic" evidence="1">
    <location>
        <begin position="157"/>
        <end position="167"/>
    </location>
</feature>
<feature type="transmembrane region" description="Helical" evidence="1">
    <location>
        <begin position="168"/>
        <end position="188"/>
    </location>
</feature>
<feature type="topological domain" description="Extracellular" evidence="1">
    <location>
        <begin position="189"/>
        <end position="197"/>
    </location>
</feature>
<feature type="transmembrane region" description="Helical" evidence="1">
    <location>
        <begin position="198"/>
        <end position="218"/>
    </location>
</feature>
<feature type="topological domain" description="Cytoplasmic" evidence="1">
    <location>
        <begin position="219"/>
        <end position="231"/>
    </location>
</feature>
<feature type="transmembrane region" description="Helical" evidence="1">
    <location>
        <begin position="232"/>
        <end position="252"/>
    </location>
</feature>
<feature type="topological domain" description="Extracellular" evidence="1">
    <location>
        <begin position="253"/>
        <end position="290"/>
    </location>
</feature>
<feature type="transmembrane region" description="Helical" evidence="1">
    <location>
        <begin position="291"/>
        <end position="311"/>
    </location>
</feature>
<feature type="topological domain" description="Cytoplasmic" evidence="1">
    <location>
        <begin position="312"/>
        <end position="323"/>
    </location>
</feature>
<feature type="transmembrane region" description="Helical" evidence="1">
    <location>
        <begin position="324"/>
        <end position="344"/>
    </location>
</feature>
<feature type="topological domain" description="Extracellular" evidence="1">
    <location>
        <begin position="345"/>
        <end position="367"/>
    </location>
</feature>
<feature type="transmembrane region" description="Helical" evidence="1">
    <location>
        <begin position="368"/>
        <end position="388"/>
    </location>
</feature>
<feature type="topological domain" description="Cytoplasmic" evidence="1">
    <location>
        <begin position="389"/>
        <end position="398"/>
    </location>
</feature>
<feature type="transmembrane region" description="Helical" evidence="1">
    <location>
        <begin position="399"/>
        <end position="419"/>
    </location>
</feature>
<feature type="topological domain" description="Extracellular" evidence="1">
    <location>
        <begin position="420"/>
        <end position="424"/>
    </location>
</feature>
<feature type="transmembrane region" description="Helical" evidence="1">
    <location>
        <begin position="425"/>
        <end position="445"/>
    </location>
</feature>
<feature type="topological domain" description="Cytoplasmic" evidence="1">
    <location>
        <begin position="446"/>
        <end position="454"/>
    </location>
</feature>
<feature type="transmembrane region" description="Helical" evidence="1">
    <location>
        <begin position="455"/>
        <end position="475"/>
    </location>
</feature>
<feature type="topological domain" description="Extracellular" evidence="1">
    <location>
        <begin position="476"/>
        <end position="563"/>
    </location>
</feature>
<feature type="transmembrane region" description="Helical" evidence="1">
    <location>
        <begin position="564"/>
        <end position="584"/>
    </location>
</feature>
<feature type="topological domain" description="Cytoplasmic" evidence="1">
    <location>
        <begin position="585"/>
        <end position="627"/>
    </location>
</feature>
<sequence length="627" mass="70899">MESVHSRDPVKEEKKHVFMGMEHELNPETHNDSNSDSYGLPQLSEKYNALRQNRSLIIQQTEIIGSAYNKWYLQAILLLSAFICGYGYGLDGNIRYIYTGYATSSYSEHSLLSTINVINAVVSAASQIIYARLSDVFGRLYLFISAVILYVVGTIIQSQAYDVQRYAAGAIFYNAGYVGVILILLIILSDFSSLKWRLLYQFVPTWPFIINTWIAGNITSRANPVVNWSWDVGMWAFIFPLSCVPIVLCMLHMQWRARKTPEWHALKGQKSYYQEHGFIKILKQLFWMLDVVGVLLMGCSLGCILVPLTLAGGVKTTWNDSRLIGPFVLGFVLIPILWIWEYRFARDPILPYRLVKDRAVWSSMGISFLIDFIYYMAADYLYTVMIVAVNESVKSATRIATLSSFVSTVASPFFALLVTRCTRLKPFIMFGCALWMVAMGLLYHFRGGSQSHSGIIGALCVWGVGTTLFTYPVTVSVQSAVSHENMATVTALNYTLYRIGSAVGSAVSGAIWTQTLYKQILKRMGDVALATTAYESPYTFIETYTWGTPQRNALMNAYKYVQRLETIVALVFCVPLIAFSLCLRDPKLTDTVAVEYIEDGEYVDTKDNDPILDWFEKLPSKFTFKRE</sequence>
<gene>
    <name type="primary">ARN1</name>
    <name type="ordered locus">YHL040C</name>
</gene>
<keyword id="KW-1003">Cell membrane</keyword>
<keyword id="KW-0967">Endosome</keyword>
<keyword id="KW-0406">Ion transport</keyword>
<keyword id="KW-0408">Iron</keyword>
<keyword id="KW-0410">Iron transport</keyword>
<keyword id="KW-0472">Membrane</keyword>
<keyword id="KW-1185">Reference proteome</keyword>
<keyword id="KW-0812">Transmembrane</keyword>
<keyword id="KW-1133">Transmembrane helix</keyword>
<keyword id="KW-0813">Transport</keyword>